<dbReference type="EMBL" id="CP001019">
    <property type="protein sequence ID" value="ACJ18217.1"/>
    <property type="molecule type" value="Genomic_DNA"/>
</dbReference>
<dbReference type="RefSeq" id="WP_012569957.1">
    <property type="nucleotide sequence ID" value="NC_011527.1"/>
</dbReference>
<dbReference type="SMR" id="B6IZT9"/>
<dbReference type="KEGG" id="cbg:CbuG_0826"/>
<dbReference type="HOGENOM" id="CLU_014841_3_0_6"/>
<dbReference type="GO" id="GO:0005737">
    <property type="term" value="C:cytoplasm"/>
    <property type="evidence" value="ECO:0007669"/>
    <property type="project" value="UniProtKB-SubCell"/>
</dbReference>
<dbReference type="GO" id="GO:0009380">
    <property type="term" value="C:excinuclease repair complex"/>
    <property type="evidence" value="ECO:0007669"/>
    <property type="project" value="InterPro"/>
</dbReference>
<dbReference type="GO" id="GO:0003677">
    <property type="term" value="F:DNA binding"/>
    <property type="evidence" value="ECO:0007669"/>
    <property type="project" value="UniProtKB-UniRule"/>
</dbReference>
<dbReference type="GO" id="GO:0009381">
    <property type="term" value="F:excinuclease ABC activity"/>
    <property type="evidence" value="ECO:0007669"/>
    <property type="project" value="UniProtKB-UniRule"/>
</dbReference>
<dbReference type="GO" id="GO:0006289">
    <property type="term" value="P:nucleotide-excision repair"/>
    <property type="evidence" value="ECO:0007669"/>
    <property type="project" value="UniProtKB-UniRule"/>
</dbReference>
<dbReference type="GO" id="GO:0009432">
    <property type="term" value="P:SOS response"/>
    <property type="evidence" value="ECO:0007669"/>
    <property type="project" value="UniProtKB-UniRule"/>
</dbReference>
<dbReference type="CDD" id="cd10434">
    <property type="entry name" value="GIY-YIG_UvrC_Cho"/>
    <property type="match status" value="1"/>
</dbReference>
<dbReference type="FunFam" id="1.10.150.20:FF:000005">
    <property type="entry name" value="UvrABC system protein C"/>
    <property type="match status" value="1"/>
</dbReference>
<dbReference type="FunFam" id="3.30.420.340:FF:000001">
    <property type="entry name" value="UvrABC system protein C"/>
    <property type="match status" value="1"/>
</dbReference>
<dbReference type="FunFam" id="3.40.1440.10:FF:000001">
    <property type="entry name" value="UvrABC system protein C"/>
    <property type="match status" value="1"/>
</dbReference>
<dbReference type="FunFam" id="4.10.860.10:FF:000002">
    <property type="entry name" value="UvrABC system protein C"/>
    <property type="match status" value="1"/>
</dbReference>
<dbReference type="Gene3D" id="1.10.150.20">
    <property type="entry name" value="5' to 3' exonuclease, C-terminal subdomain"/>
    <property type="match status" value="1"/>
</dbReference>
<dbReference type="Gene3D" id="3.40.1440.10">
    <property type="entry name" value="GIY-YIG endonuclease"/>
    <property type="match status" value="1"/>
</dbReference>
<dbReference type="Gene3D" id="4.10.860.10">
    <property type="entry name" value="UVR domain"/>
    <property type="match status" value="1"/>
</dbReference>
<dbReference type="Gene3D" id="3.30.420.340">
    <property type="entry name" value="UvrC, RNAse H endonuclease domain"/>
    <property type="match status" value="1"/>
</dbReference>
<dbReference type="HAMAP" id="MF_00203">
    <property type="entry name" value="UvrC"/>
    <property type="match status" value="1"/>
</dbReference>
<dbReference type="InterPro" id="IPR000305">
    <property type="entry name" value="GIY-YIG_endonuc"/>
</dbReference>
<dbReference type="InterPro" id="IPR035901">
    <property type="entry name" value="GIY-YIG_endonuc_sf"/>
</dbReference>
<dbReference type="InterPro" id="IPR047296">
    <property type="entry name" value="GIY-YIG_UvrC_Cho"/>
</dbReference>
<dbReference type="InterPro" id="IPR003583">
    <property type="entry name" value="Hlx-hairpin-Hlx_DNA-bd_motif"/>
</dbReference>
<dbReference type="InterPro" id="IPR010994">
    <property type="entry name" value="RuvA_2-like"/>
</dbReference>
<dbReference type="InterPro" id="IPR001943">
    <property type="entry name" value="UVR_dom"/>
</dbReference>
<dbReference type="InterPro" id="IPR036876">
    <property type="entry name" value="UVR_dom_sf"/>
</dbReference>
<dbReference type="InterPro" id="IPR050066">
    <property type="entry name" value="UvrABC_protein_C"/>
</dbReference>
<dbReference type="InterPro" id="IPR004791">
    <property type="entry name" value="UvrC"/>
</dbReference>
<dbReference type="InterPro" id="IPR001162">
    <property type="entry name" value="UvrC_RNase_H_dom"/>
</dbReference>
<dbReference type="InterPro" id="IPR038476">
    <property type="entry name" value="UvrC_RNase_H_dom_sf"/>
</dbReference>
<dbReference type="NCBIfam" id="NF001824">
    <property type="entry name" value="PRK00558.1-5"/>
    <property type="match status" value="1"/>
</dbReference>
<dbReference type="NCBIfam" id="TIGR00194">
    <property type="entry name" value="uvrC"/>
    <property type="match status" value="1"/>
</dbReference>
<dbReference type="PANTHER" id="PTHR30562:SF1">
    <property type="entry name" value="UVRABC SYSTEM PROTEIN C"/>
    <property type="match status" value="1"/>
</dbReference>
<dbReference type="PANTHER" id="PTHR30562">
    <property type="entry name" value="UVRC/OXIDOREDUCTASE"/>
    <property type="match status" value="1"/>
</dbReference>
<dbReference type="Pfam" id="PF01541">
    <property type="entry name" value="GIY-YIG"/>
    <property type="match status" value="1"/>
</dbReference>
<dbReference type="Pfam" id="PF14520">
    <property type="entry name" value="HHH_5"/>
    <property type="match status" value="1"/>
</dbReference>
<dbReference type="Pfam" id="PF02151">
    <property type="entry name" value="UVR"/>
    <property type="match status" value="1"/>
</dbReference>
<dbReference type="Pfam" id="PF22920">
    <property type="entry name" value="UvrC_RNaseH"/>
    <property type="match status" value="1"/>
</dbReference>
<dbReference type="Pfam" id="PF08459">
    <property type="entry name" value="UvrC_RNaseH_dom"/>
    <property type="match status" value="1"/>
</dbReference>
<dbReference type="SMART" id="SM00465">
    <property type="entry name" value="GIYc"/>
    <property type="match status" value="1"/>
</dbReference>
<dbReference type="SMART" id="SM00278">
    <property type="entry name" value="HhH1"/>
    <property type="match status" value="2"/>
</dbReference>
<dbReference type="SUPFAM" id="SSF46600">
    <property type="entry name" value="C-terminal UvrC-binding domain of UvrB"/>
    <property type="match status" value="1"/>
</dbReference>
<dbReference type="SUPFAM" id="SSF82771">
    <property type="entry name" value="GIY-YIG endonuclease"/>
    <property type="match status" value="1"/>
</dbReference>
<dbReference type="SUPFAM" id="SSF47781">
    <property type="entry name" value="RuvA domain 2-like"/>
    <property type="match status" value="1"/>
</dbReference>
<dbReference type="PROSITE" id="PS50164">
    <property type="entry name" value="GIY_YIG"/>
    <property type="match status" value="1"/>
</dbReference>
<dbReference type="PROSITE" id="PS50151">
    <property type="entry name" value="UVR"/>
    <property type="match status" value="1"/>
</dbReference>
<dbReference type="PROSITE" id="PS50165">
    <property type="entry name" value="UVRC"/>
    <property type="match status" value="1"/>
</dbReference>
<sequence length="609" mass="69079">MTIDNPSAFLKTLPTGSGVYQMQDAQGKVIYVGKARNLQKRVSSYFRRQLDSKTQAMMAQVQSIQTTITRNENEALLLEASFIKQFRPRYNVLLRDDKSYPYLYLATHQKFPRLDFYRGAKKAPGRYFGPYPNAGSVRENLALIQKLFKLRQCSESFFKNRTRPCLQYQIKRCTAPCVGYVNEQEYRRQVEDAILFFEGKNDQVIIKLTERMEVASENLVFEEAAHYRDQIRQLRRLQKQQIITGGKGNIDIIGIAESNGAIGFAILFIRSGRMIGHKPFFPNTPLGTTLQTALVEFIPQYYLSPLRNGDIPERIVTSEPLEDRLWIQRALSSGLNRKLAITDQKRAPYKQWQAMAALNAAQALSQHLAQKNTFALKLEAIQKSLALPNPIARIECFDISHTLGEATVASCVVFGEEGPIKKDYRRFNISGVTPGDDYGALRQALTRRYVRLKEGEGILPDVLLIDGGMGQLRQAAEVLEELQVSGVILTAIAKGPGRKAGLEKLFVWGRREEIHLPADNIAFHLIQQIRDEAHRFAITAHCNRRAKRRVESTLQEIEGIGPKRRQKLLKYFGGLQELQRASIEEIARVPGVSETLAKAIYDDCHQHKG</sequence>
<feature type="chain" id="PRO_1000099473" description="UvrABC system protein C">
    <location>
        <begin position="1"/>
        <end position="609"/>
    </location>
</feature>
<feature type="domain" description="GIY-YIG" evidence="1">
    <location>
        <begin position="15"/>
        <end position="92"/>
    </location>
</feature>
<feature type="domain" description="UVR" evidence="1">
    <location>
        <begin position="202"/>
        <end position="237"/>
    </location>
</feature>
<proteinExistence type="inferred from homology"/>
<comment type="function">
    <text evidence="1">The UvrABC repair system catalyzes the recognition and processing of DNA lesions. UvrC both incises the 5' and 3' sides of the lesion. The N-terminal half is responsible for the 3' incision and the C-terminal half is responsible for the 5' incision.</text>
</comment>
<comment type="subunit">
    <text evidence="1">Interacts with UvrB in an incision complex.</text>
</comment>
<comment type="subcellular location">
    <subcellularLocation>
        <location evidence="1">Cytoplasm</location>
    </subcellularLocation>
</comment>
<comment type="similarity">
    <text evidence="1">Belongs to the UvrC family.</text>
</comment>
<accession>B6IZT9</accession>
<reference key="1">
    <citation type="journal article" date="2009" name="Infect. Immun.">
        <title>Comparative genomics reveal extensive transposon-mediated genomic plasticity and diversity among potential effector proteins within the genus Coxiella.</title>
        <authorList>
            <person name="Beare P.A."/>
            <person name="Unsworth N."/>
            <person name="Andoh M."/>
            <person name="Voth D.E."/>
            <person name="Omsland A."/>
            <person name="Gilk S.D."/>
            <person name="Williams K.P."/>
            <person name="Sobral B.W."/>
            <person name="Kupko J.J. III"/>
            <person name="Porcella S.F."/>
            <person name="Samuel J.E."/>
            <person name="Heinzen R.A."/>
        </authorList>
    </citation>
    <scope>NUCLEOTIDE SEQUENCE [LARGE SCALE GENOMIC DNA]</scope>
    <source>
        <strain>CbuG_Q212</strain>
    </source>
</reference>
<evidence type="ECO:0000255" key="1">
    <source>
        <dbReference type="HAMAP-Rule" id="MF_00203"/>
    </source>
</evidence>
<keyword id="KW-0963">Cytoplasm</keyword>
<keyword id="KW-0227">DNA damage</keyword>
<keyword id="KW-0228">DNA excision</keyword>
<keyword id="KW-0234">DNA repair</keyword>
<keyword id="KW-0267">Excision nuclease</keyword>
<keyword id="KW-0742">SOS response</keyword>
<gene>
    <name evidence="1" type="primary">uvrC</name>
    <name type="ordered locus">CbuG_0826</name>
</gene>
<protein>
    <recommendedName>
        <fullName evidence="1">UvrABC system protein C</fullName>
        <shortName evidence="1">Protein UvrC</shortName>
    </recommendedName>
    <alternativeName>
        <fullName evidence="1">Excinuclease ABC subunit C</fullName>
    </alternativeName>
</protein>
<name>UVRC_COXB2</name>
<organism>
    <name type="scientific">Coxiella burnetii (strain CbuG_Q212)</name>
    <name type="common">Coxiella burnetii (strain Q212)</name>
    <dbReference type="NCBI Taxonomy" id="434923"/>
    <lineage>
        <taxon>Bacteria</taxon>
        <taxon>Pseudomonadati</taxon>
        <taxon>Pseudomonadota</taxon>
        <taxon>Gammaproteobacteria</taxon>
        <taxon>Legionellales</taxon>
        <taxon>Coxiellaceae</taxon>
        <taxon>Coxiella</taxon>
    </lineage>
</organism>